<organism>
    <name type="scientific">Rattus norvegicus</name>
    <name type="common">Rat</name>
    <dbReference type="NCBI Taxonomy" id="10116"/>
    <lineage>
        <taxon>Eukaryota</taxon>
        <taxon>Metazoa</taxon>
        <taxon>Chordata</taxon>
        <taxon>Craniata</taxon>
        <taxon>Vertebrata</taxon>
        <taxon>Euteleostomi</taxon>
        <taxon>Mammalia</taxon>
        <taxon>Eutheria</taxon>
        <taxon>Euarchontoglires</taxon>
        <taxon>Glires</taxon>
        <taxon>Rodentia</taxon>
        <taxon>Myomorpha</taxon>
        <taxon>Muroidea</taxon>
        <taxon>Muridae</taxon>
        <taxon>Murinae</taxon>
        <taxon>Rattus</taxon>
    </lineage>
</organism>
<proteinExistence type="evidence at protein level"/>
<accession>Q64535</accession>
<accession>Q63676</accession>
<accession>Q9JLY3</accession>
<comment type="function">
    <text evidence="2">Copper ion transmembrane transporter involved in the export of copper out of the cells, such as the efflux of hepatic copper into the bile.</text>
</comment>
<comment type="catalytic activity">
    <reaction evidence="2">
        <text>Cu(+)(in) + ATP + H2O = Cu(+)(out) + ADP + phosphate + H(+)</text>
        <dbReference type="Rhea" id="RHEA:25792"/>
        <dbReference type="ChEBI" id="CHEBI:15377"/>
        <dbReference type="ChEBI" id="CHEBI:15378"/>
        <dbReference type="ChEBI" id="CHEBI:30616"/>
        <dbReference type="ChEBI" id="CHEBI:43474"/>
        <dbReference type="ChEBI" id="CHEBI:49552"/>
        <dbReference type="ChEBI" id="CHEBI:456216"/>
        <dbReference type="EC" id="7.2.2.8"/>
    </reaction>
</comment>
<comment type="subunit">
    <text evidence="2">Monomer. Interacts with COMMD1/MURR1 (By similarity). Interacts with DCTN4, in a copper-dependent manner (By similarity). Interacts with ATOX1 (By similarity). Interacts (via C-terminus) with ZBTB16/PLZF (By similarity).</text>
</comment>
<comment type="subcellular location">
    <subcellularLocation>
        <location evidence="2">Golgi apparatus</location>
        <location evidence="2">trans-Golgi network membrane</location>
        <topology evidence="3">Multi-pass membrane protein</topology>
    </subcellularLocation>
    <subcellularLocation>
        <location evidence="2">Late endosome</location>
    </subcellularLocation>
    <text evidence="2">Predominantly found in the trans-Golgi network (TGN). Not redistributed to the plasma membrane in response to elevated copper levels.</text>
</comment>
<comment type="alternative products">
    <event type="alternative splicing"/>
    <event type="alternative initiation"/>
    <isoform>
        <id>Q64535-1</id>
        <name>Long</name>
        <sequence type="displayed"/>
    </isoform>
    <isoform>
        <id>Q64535-2</id>
        <name>Short</name>
        <sequence type="described" ref="VSP_000428"/>
    </isoform>
    <isoform>
        <id>Q64535-3</id>
        <name>PINAM2</name>
        <sequence type="described" ref="VSP_018666"/>
    </isoform>
</comment>
<comment type="tissue specificity">
    <text>Expressed in brain, liver, kidney, spleen and stomach. In brain, detected in neuronal cells of the hippocampal formation, olfactory bulbs, cerebellum, cerebral cortex and nuclei in the brainstem. Isoform PINA is expressed during night in adult pineal gland (pinealocytes) and retina. Isoform PINA is not detected in other tissue.</text>
</comment>
<comment type="developmental stage">
    <text>Isoform PINA is expressed during daytime in embryonic pineal (postnatal day 2 and 7) and embryonic retinal pigment epithelium (embryonic day 14.5 and postnatal day 16). Daytime expression disappears in pineal at postnatal day 16 and in adult retina.</text>
</comment>
<comment type="domain">
    <text evidence="1">Each HMA domain can bind a copper ion, they are tightly packed and closely interact with each other. Wild-type ATP7B can usually be loaded with an average 5.5 copper atoms per molecule (By similarity).</text>
</comment>
<comment type="disease">
    <text evidence="6 7">Deficiency of Atp7b expression is the cause of the Long-Evans Cinnamon (LEC) phenotype, inherited in an autosomal recessive manner, characterized by excessive hepatic copper accumulation, defective holoceruloplasmin biosynthesis, impaired biliary copper excretion and the development of necrotizing hepatitis by 4 months of age.</text>
</comment>
<comment type="miscellaneous">
    <molecule>Isoform Short</molecule>
    <text evidence="9">Produced by alternative splicing. Does not show copper transport activity.</text>
</comment>
<comment type="miscellaneous">
    <molecule>Isoform PINAM2</molecule>
    <text evidence="9">Produced by alternative initiation at Met-815 of isoform Long. Shows copper transport activity.</text>
</comment>
<comment type="similarity">
    <text evidence="9">Belongs to the cation transport ATPase (P-type) (TC 3.A.3) family. Type IB subfamily.</text>
</comment>
<reference key="1">
    <citation type="journal article" date="1994" name="Nat. Genet.">
        <title>The LEC rat has a deletion in the copper transporting ATPase gene homologous to the Wilson disease gene.</title>
        <authorList>
            <person name="Wu J."/>
            <person name="Forbes J.R."/>
            <person name="Chen H.S."/>
            <person name="Cox D.W."/>
        </authorList>
    </citation>
    <scope>NUCLEOTIDE SEQUENCE [MRNA]</scope>
    <scope>INVOLVEMENT IN LEC</scope>
    <source>
        <strain>Sprague-Dawley</strain>
        <tissue>Liver</tissue>
    </source>
</reference>
<reference key="2">
    <citation type="journal article" date="1999" name="J. Neurosci.">
        <title>A novel pineal night-specific ATPase encoded by the Wilson disease gene.</title>
        <authorList>
            <person name="Borjigin J."/>
            <person name="Payne A.S."/>
            <person name="Deng J."/>
            <person name="Li X."/>
            <person name="Wang M.M."/>
            <person name="Ovodenko B."/>
            <person name="Gitlin J.D."/>
            <person name="Snyder S.H."/>
        </authorList>
    </citation>
    <scope>NUCLEOTIDE SEQUENCE [MRNA] (ISOFORM SHORT)</scope>
    <source>
        <strain>Sprague-Dawley</strain>
        <tissue>Pineal gland</tissue>
    </source>
</reference>
<reference key="3">
    <citation type="journal article" date="1994" name="Biochem. J.">
        <title>Expression of the Wilson disease gene is deficient in the Long-Evans Cinnamon rat.</title>
        <authorList>
            <person name="Yamaguchi Y."/>
            <person name="Heiny M.E."/>
            <person name="Shimizu N."/>
            <person name="Aoki T."/>
            <person name="Gitlin J.D."/>
        </authorList>
    </citation>
    <scope>NUCLEOTIDE SEQUENCE [MRNA] OF 530-616</scope>
    <scope>INVOLVEMENT IN LEC</scope>
    <source>
        <strain>Sprague-Dawley</strain>
        <tissue>Liver</tissue>
    </source>
</reference>
<reference key="4">
    <citation type="journal article" date="2012" name="Nat. Commun.">
        <title>Quantitative maps of protein phosphorylation sites across 14 different rat organs and tissues.</title>
        <authorList>
            <person name="Lundby A."/>
            <person name="Secher A."/>
            <person name="Lage K."/>
            <person name="Nordsborg N.B."/>
            <person name="Dmytriyev A."/>
            <person name="Lundby C."/>
            <person name="Olsen J.V."/>
        </authorList>
    </citation>
    <scope>PHOSPHORYLATION [LARGE SCALE ANALYSIS] AT SER-469; SER-471; SER-474; SER-1384 AND SER-1443</scope>
    <scope>IDENTIFICATION BY MASS SPECTROMETRY [LARGE SCALE ANALYSIS]</scope>
</reference>
<name>ATP7B_RAT</name>
<gene>
    <name type="primary">Atp7b</name>
    <name type="synonym">Pina</name>
    <name type="synonym">Wnd</name>
</gene>
<evidence type="ECO:0000250" key="1"/>
<evidence type="ECO:0000250" key="2">
    <source>
        <dbReference type="UniProtKB" id="P35670"/>
    </source>
</evidence>
<evidence type="ECO:0000255" key="3"/>
<evidence type="ECO:0000255" key="4">
    <source>
        <dbReference type="PROSITE-ProRule" id="PRU00280"/>
    </source>
</evidence>
<evidence type="ECO:0000256" key="5">
    <source>
        <dbReference type="SAM" id="MobiDB-lite"/>
    </source>
</evidence>
<evidence type="ECO:0000269" key="6">
    <source>
    </source>
</evidence>
<evidence type="ECO:0000269" key="7">
    <source>
    </source>
</evidence>
<evidence type="ECO:0000303" key="8">
    <source>
    </source>
</evidence>
<evidence type="ECO:0000305" key="9"/>
<evidence type="ECO:0007744" key="10">
    <source>
    </source>
</evidence>
<feature type="chain" id="PRO_0000002511" description="Copper-transporting ATPase 2">
    <location>
        <begin position="1"/>
        <end position="1451"/>
    </location>
</feature>
<feature type="topological domain" description="Cytoplasmic" evidence="3">
    <location>
        <begin position="1"/>
        <end position="646"/>
    </location>
</feature>
<feature type="transmembrane region" description="Helical" evidence="3">
    <location>
        <begin position="647"/>
        <end position="668"/>
    </location>
</feature>
<feature type="topological domain" description="Extracellular" evidence="3">
    <location>
        <begin position="669"/>
        <end position="690"/>
    </location>
</feature>
<feature type="transmembrane region" description="Helical" evidence="3">
    <location>
        <begin position="691"/>
        <end position="710"/>
    </location>
</feature>
<feature type="topological domain" description="Cytoplasmic" evidence="3">
    <location>
        <begin position="711"/>
        <end position="717"/>
    </location>
</feature>
<feature type="transmembrane region" description="Helical" evidence="3">
    <location>
        <begin position="718"/>
        <end position="738"/>
    </location>
</feature>
<feature type="topological domain" description="Extracellular" evidence="3">
    <location>
        <begin position="739"/>
        <end position="757"/>
    </location>
</feature>
<feature type="transmembrane region" description="Helical" evidence="3">
    <location>
        <begin position="758"/>
        <end position="778"/>
    </location>
</feature>
<feature type="topological domain" description="Cytoplasmic" evidence="3">
    <location>
        <begin position="779"/>
        <end position="912"/>
    </location>
</feature>
<feature type="transmembrane region" description="Helical" evidence="3">
    <location>
        <begin position="913"/>
        <end position="935"/>
    </location>
</feature>
<feature type="topological domain" description="Extracellular" evidence="3">
    <location>
        <begin position="936"/>
        <end position="965"/>
    </location>
</feature>
<feature type="transmembrane region" description="Helical" evidence="3">
    <location>
        <begin position="966"/>
        <end position="987"/>
    </location>
</feature>
<feature type="topological domain" description="Cytoplasmic" evidence="3">
    <location>
        <begin position="988"/>
        <end position="1310"/>
    </location>
</feature>
<feature type="transmembrane region" description="Helical" evidence="3">
    <location>
        <begin position="1311"/>
        <end position="1328"/>
    </location>
</feature>
<feature type="topological domain" description="Extracellular" evidence="3">
    <location>
        <begin position="1329"/>
        <end position="1339"/>
    </location>
</feature>
<feature type="transmembrane region" description="Helical" evidence="3">
    <location>
        <begin position="1340"/>
        <end position="1357"/>
    </location>
</feature>
<feature type="topological domain" description="Cytoplasmic" evidence="3">
    <location>
        <begin position="1358"/>
        <end position="1451"/>
    </location>
</feature>
<feature type="domain" description="HMA 1" evidence="4">
    <location>
        <begin position="57"/>
        <end position="123"/>
    </location>
</feature>
<feature type="domain" description="HMA 2" evidence="4">
    <location>
        <begin position="142"/>
        <end position="208"/>
    </location>
</feature>
<feature type="domain" description="HMA 3" evidence="4">
    <location>
        <begin position="256"/>
        <end position="322"/>
    </location>
</feature>
<feature type="domain" description="HMA 4" evidence="4">
    <location>
        <begin position="355"/>
        <end position="421"/>
    </location>
</feature>
<feature type="domain" description="HMA 5" evidence="4">
    <location>
        <begin position="481"/>
        <end position="547"/>
    </location>
</feature>
<feature type="domain" description="HMA 6" evidence="4">
    <location>
        <begin position="557"/>
        <end position="623"/>
    </location>
</feature>
<feature type="region of interest" description="Disordered" evidence="5">
    <location>
        <begin position="328"/>
        <end position="353"/>
    </location>
</feature>
<feature type="compositionally biased region" description="Low complexity" evidence="5">
    <location>
        <begin position="335"/>
        <end position="345"/>
    </location>
</feature>
<feature type="active site" description="4-aspartylphosphate intermediate" evidence="1">
    <location>
        <position position="1020"/>
    </location>
</feature>
<feature type="binding site" evidence="4">
    <location>
        <position position="68"/>
    </location>
    <ligand>
        <name>Cu(+)</name>
        <dbReference type="ChEBI" id="CHEBI:49552"/>
        <label>1</label>
    </ligand>
</feature>
<feature type="binding site" evidence="4">
    <location>
        <position position="71"/>
    </location>
    <ligand>
        <name>Cu(+)</name>
        <dbReference type="ChEBI" id="CHEBI:49552"/>
        <label>1</label>
    </ligand>
</feature>
<feature type="binding site" evidence="4">
    <location>
        <position position="153"/>
    </location>
    <ligand>
        <name>Cu(+)</name>
        <dbReference type="ChEBI" id="CHEBI:49552"/>
        <label>2</label>
    </ligand>
</feature>
<feature type="binding site" evidence="4">
    <location>
        <position position="156"/>
    </location>
    <ligand>
        <name>Cu(+)</name>
        <dbReference type="ChEBI" id="CHEBI:49552"/>
        <label>2</label>
    </ligand>
</feature>
<feature type="binding site" evidence="4">
    <location>
        <position position="267"/>
    </location>
    <ligand>
        <name>Cu(+)</name>
        <dbReference type="ChEBI" id="CHEBI:49552"/>
        <label>3</label>
    </ligand>
</feature>
<feature type="binding site" evidence="4">
    <location>
        <position position="270"/>
    </location>
    <ligand>
        <name>Cu(+)</name>
        <dbReference type="ChEBI" id="CHEBI:49552"/>
        <label>3</label>
    </ligand>
</feature>
<feature type="binding site" evidence="4">
    <location>
        <position position="492"/>
    </location>
    <ligand>
        <name>Cu(+)</name>
        <dbReference type="ChEBI" id="CHEBI:49552"/>
        <label>4</label>
    </ligand>
</feature>
<feature type="binding site" evidence="4">
    <location>
        <position position="495"/>
    </location>
    <ligand>
        <name>Cu(+)</name>
        <dbReference type="ChEBI" id="CHEBI:49552"/>
        <label>4</label>
    </ligand>
</feature>
<feature type="binding site" evidence="4">
    <location>
        <position position="568"/>
    </location>
    <ligand>
        <name>Cu(+)</name>
        <dbReference type="ChEBI" id="CHEBI:49552"/>
        <label>5</label>
    </ligand>
</feature>
<feature type="binding site" evidence="4">
    <location>
        <position position="571"/>
    </location>
    <ligand>
        <name>Cu(+)</name>
        <dbReference type="ChEBI" id="CHEBI:49552"/>
        <label>5</label>
    </ligand>
</feature>
<feature type="binding site">
    <location>
        <position position="1255"/>
    </location>
    <ligand>
        <name>Mg(2+)</name>
        <dbReference type="ChEBI" id="CHEBI:18420"/>
    </ligand>
</feature>
<feature type="binding site">
    <location>
        <position position="1259"/>
    </location>
    <ligand>
        <name>Mg(2+)</name>
        <dbReference type="ChEBI" id="CHEBI:18420"/>
    </ligand>
</feature>
<feature type="modified residue" description="Phosphoserine" evidence="10">
    <location>
        <position position="469"/>
    </location>
</feature>
<feature type="modified residue" description="Phosphoserine" evidence="10">
    <location>
        <position position="471"/>
    </location>
</feature>
<feature type="modified residue" description="Phosphoserine" evidence="10">
    <location>
        <position position="474"/>
    </location>
</feature>
<feature type="modified residue" description="Phosphoserine" evidence="10">
    <location>
        <position position="1384"/>
    </location>
</feature>
<feature type="modified residue" description="Phosphoserine" evidence="10">
    <location>
        <position position="1443"/>
    </location>
</feature>
<feature type="splice variant" id="VSP_018666" description="In isoform PINAM2." evidence="9">
    <location>
        <begin position="1"/>
        <end position="814"/>
    </location>
</feature>
<feature type="splice variant" id="VSP_000428" description="In isoform Short." evidence="8">
    <location>
        <begin position="1"/>
        <end position="788"/>
    </location>
</feature>
<feature type="sequence conflict" description="In Ref. 2; AAD16009." evidence="9" ref="2">
    <original>SI</original>
    <variation>IY</variation>
    <location>
        <begin position="1194"/>
        <end position="1195"/>
    </location>
</feature>
<feature type="sequence conflict" description="In Ref. 2; AAD16009." evidence="9" ref="2">
    <original>D</original>
    <variation>E</variation>
    <location>
        <position position="1281"/>
    </location>
</feature>
<feature type="sequence conflict" description="In Ref. 2; AAD16009." evidence="9" ref="2">
    <original>A</original>
    <variation>AMA</variation>
    <location>
        <position position="1346"/>
    </location>
</feature>
<protein>
    <recommendedName>
        <fullName>Copper-transporting ATPase 2</fullName>
        <ecNumber evidence="2">7.2.2.8</ecNumber>
    </recommendedName>
    <alternativeName>
        <fullName>Copper pump 2</fullName>
    </alternativeName>
    <alternativeName>
        <fullName>Pineal night-specific ATPase</fullName>
    </alternativeName>
    <alternativeName>
        <fullName>Wilson disease-associated protein homolog</fullName>
    </alternativeName>
</protein>
<dbReference type="EC" id="7.2.2.8" evidence="2"/>
<dbReference type="EMBL" id="U08344">
    <property type="protein sequence ID" value="AAA62157.1"/>
    <property type="molecule type" value="mRNA"/>
</dbReference>
<dbReference type="EMBL" id="AF120492">
    <property type="protein sequence ID" value="AAD16009.1"/>
    <property type="molecule type" value="mRNA"/>
</dbReference>
<dbReference type="EMBL" id="L28173">
    <property type="protein sequence ID" value="AAA21810.1"/>
    <property type="molecule type" value="mRNA"/>
</dbReference>
<dbReference type="PIR" id="I58124">
    <property type="entry name" value="I58124"/>
</dbReference>
<dbReference type="SMR" id="Q64535"/>
<dbReference type="FunCoup" id="Q64535">
    <property type="interactions" value="933"/>
</dbReference>
<dbReference type="STRING" id="10116.ENSRNOP00000069905"/>
<dbReference type="iPTMnet" id="Q64535"/>
<dbReference type="PhosphoSitePlus" id="Q64535"/>
<dbReference type="PaxDb" id="10116-ENSRNOP00000054880"/>
<dbReference type="UCSC" id="RGD:2180">
    <molecule id="Q64535-1"/>
    <property type="organism name" value="rat"/>
</dbReference>
<dbReference type="AGR" id="RGD:2180"/>
<dbReference type="RGD" id="2180">
    <property type="gene designation" value="Atp7b"/>
</dbReference>
<dbReference type="eggNOG" id="KOG0207">
    <property type="taxonomic scope" value="Eukaryota"/>
</dbReference>
<dbReference type="InParanoid" id="Q64535"/>
<dbReference type="PhylomeDB" id="Q64535"/>
<dbReference type="BRENDA" id="7.2.2.9">
    <property type="organism ID" value="5301"/>
</dbReference>
<dbReference type="Reactome" id="R-RNO-936837">
    <property type="pathway name" value="Ion transport by P-type ATPases"/>
</dbReference>
<dbReference type="PRO" id="PR:Q64535"/>
<dbReference type="Proteomes" id="UP000002494">
    <property type="component" value="Unplaced"/>
</dbReference>
<dbReference type="GO" id="GO:0045177">
    <property type="term" value="C:apical part of cell"/>
    <property type="evidence" value="ECO:0000314"/>
    <property type="project" value="RGD"/>
</dbReference>
<dbReference type="GO" id="GO:0016323">
    <property type="term" value="C:basolateral plasma membrane"/>
    <property type="evidence" value="ECO:0000314"/>
    <property type="project" value="RGD"/>
</dbReference>
<dbReference type="GO" id="GO:0005923">
    <property type="term" value="C:bicellular tight junction"/>
    <property type="evidence" value="ECO:0000314"/>
    <property type="project" value="RGD"/>
</dbReference>
<dbReference type="GO" id="GO:0031410">
    <property type="term" value="C:cytoplasmic vesicle"/>
    <property type="evidence" value="ECO:0000266"/>
    <property type="project" value="RGD"/>
</dbReference>
<dbReference type="GO" id="GO:0005770">
    <property type="term" value="C:late endosome"/>
    <property type="evidence" value="ECO:0000314"/>
    <property type="project" value="RGD"/>
</dbReference>
<dbReference type="GO" id="GO:0016020">
    <property type="term" value="C:membrane"/>
    <property type="evidence" value="ECO:0000266"/>
    <property type="project" value="RGD"/>
</dbReference>
<dbReference type="GO" id="GO:0048471">
    <property type="term" value="C:perinuclear region of cytoplasm"/>
    <property type="evidence" value="ECO:0000314"/>
    <property type="project" value="RGD"/>
</dbReference>
<dbReference type="GO" id="GO:0005886">
    <property type="term" value="C:plasma membrane"/>
    <property type="evidence" value="ECO:0000318"/>
    <property type="project" value="GO_Central"/>
</dbReference>
<dbReference type="GO" id="GO:0070160">
    <property type="term" value="C:tight junction"/>
    <property type="evidence" value="ECO:0000314"/>
    <property type="project" value="RGD"/>
</dbReference>
<dbReference type="GO" id="GO:0005802">
    <property type="term" value="C:trans-Golgi network"/>
    <property type="evidence" value="ECO:0000314"/>
    <property type="project" value="RGD"/>
</dbReference>
<dbReference type="GO" id="GO:0032588">
    <property type="term" value="C:trans-Golgi network membrane"/>
    <property type="evidence" value="ECO:0000250"/>
    <property type="project" value="UniProtKB"/>
</dbReference>
<dbReference type="GO" id="GO:0005524">
    <property type="term" value="F:ATP binding"/>
    <property type="evidence" value="ECO:0000266"/>
    <property type="project" value="RGD"/>
</dbReference>
<dbReference type="GO" id="GO:0016887">
    <property type="term" value="F:ATP hydrolysis activity"/>
    <property type="evidence" value="ECO:0007669"/>
    <property type="project" value="InterPro"/>
</dbReference>
<dbReference type="GO" id="GO:0005507">
    <property type="term" value="F:copper ion binding"/>
    <property type="evidence" value="ECO:0000314"/>
    <property type="project" value="RGD"/>
</dbReference>
<dbReference type="GO" id="GO:0005375">
    <property type="term" value="F:copper ion transmembrane transporter activity"/>
    <property type="evidence" value="ECO:0000314"/>
    <property type="project" value="RGD"/>
</dbReference>
<dbReference type="GO" id="GO:0043682">
    <property type="term" value="F:P-type divalent copper transporter activity"/>
    <property type="evidence" value="ECO:0000250"/>
    <property type="project" value="UniProtKB"/>
</dbReference>
<dbReference type="GO" id="GO:0140581">
    <property type="term" value="F:P-type monovalent copper transporter activity"/>
    <property type="evidence" value="ECO:0007669"/>
    <property type="project" value="UniProtKB-EC"/>
</dbReference>
<dbReference type="GO" id="GO:0008270">
    <property type="term" value="F:zinc ion binding"/>
    <property type="evidence" value="ECO:0000314"/>
    <property type="project" value="RGD"/>
</dbReference>
<dbReference type="GO" id="GO:0071280">
    <property type="term" value="P:cellular response to copper ion"/>
    <property type="evidence" value="ECO:0000315"/>
    <property type="project" value="RGD"/>
</dbReference>
<dbReference type="GO" id="GO:0071287">
    <property type="term" value="P:cellular response to manganese ion"/>
    <property type="evidence" value="ECO:0000270"/>
    <property type="project" value="RGD"/>
</dbReference>
<dbReference type="GO" id="GO:0007623">
    <property type="term" value="P:circadian rhythm"/>
    <property type="evidence" value="ECO:0000270"/>
    <property type="project" value="RGD"/>
</dbReference>
<dbReference type="GO" id="GO:0060003">
    <property type="term" value="P:copper ion export"/>
    <property type="evidence" value="ECO:0000315"/>
    <property type="project" value="RGD"/>
</dbReference>
<dbReference type="GO" id="GO:0015677">
    <property type="term" value="P:copper ion import"/>
    <property type="evidence" value="ECO:0000266"/>
    <property type="project" value="RGD"/>
</dbReference>
<dbReference type="GO" id="GO:0006825">
    <property type="term" value="P:copper ion transport"/>
    <property type="evidence" value="ECO:0000266"/>
    <property type="project" value="RGD"/>
</dbReference>
<dbReference type="GO" id="GO:0051649">
    <property type="term" value="P:establishment of localization in cell"/>
    <property type="evidence" value="ECO:0000266"/>
    <property type="project" value="RGD"/>
</dbReference>
<dbReference type="GO" id="GO:0006878">
    <property type="term" value="P:intracellular copper ion homeostasis"/>
    <property type="evidence" value="ECO:0000266"/>
    <property type="project" value="RGD"/>
</dbReference>
<dbReference type="GO" id="GO:0006882">
    <property type="term" value="P:intracellular zinc ion homeostasis"/>
    <property type="evidence" value="ECO:0000266"/>
    <property type="project" value="RGD"/>
</dbReference>
<dbReference type="GO" id="GO:0007595">
    <property type="term" value="P:lactation"/>
    <property type="evidence" value="ECO:0000270"/>
    <property type="project" value="RGD"/>
</dbReference>
<dbReference type="GO" id="GO:0051591">
    <property type="term" value="P:response to cAMP"/>
    <property type="evidence" value="ECO:0000270"/>
    <property type="project" value="RGD"/>
</dbReference>
<dbReference type="GO" id="GO:0046688">
    <property type="term" value="P:response to copper ion"/>
    <property type="evidence" value="ECO:0000270"/>
    <property type="project" value="RGD"/>
</dbReference>
<dbReference type="GO" id="GO:1990637">
    <property type="term" value="P:response to prolactin"/>
    <property type="evidence" value="ECO:0000270"/>
    <property type="project" value="RGD"/>
</dbReference>
<dbReference type="GO" id="GO:0010043">
    <property type="term" value="P:response to zinc ion"/>
    <property type="evidence" value="ECO:0000270"/>
    <property type="project" value="RGD"/>
</dbReference>
<dbReference type="GO" id="GO:0051208">
    <property type="term" value="P:sequestering of calcium ion"/>
    <property type="evidence" value="ECO:0000266"/>
    <property type="project" value="RGD"/>
</dbReference>
<dbReference type="CDD" id="cd00371">
    <property type="entry name" value="HMA"/>
    <property type="match status" value="6"/>
</dbReference>
<dbReference type="CDD" id="cd02094">
    <property type="entry name" value="P-type_ATPase_Cu-like"/>
    <property type="match status" value="1"/>
</dbReference>
<dbReference type="FunFam" id="3.30.70.100:FF:000001">
    <property type="entry name" value="ATPase copper transporting beta"/>
    <property type="match status" value="5"/>
</dbReference>
<dbReference type="FunFam" id="3.30.70.100:FF:000009">
    <property type="entry name" value="ATPase copper transporting beta"/>
    <property type="match status" value="1"/>
</dbReference>
<dbReference type="FunFam" id="3.40.1110.10:FF:000015">
    <property type="entry name" value="ATPase copper transporting beta"/>
    <property type="match status" value="1"/>
</dbReference>
<dbReference type="FunFam" id="3.40.50.1000:FF:000092">
    <property type="entry name" value="copper-transporting ATPase 1 isoform X2"/>
    <property type="match status" value="1"/>
</dbReference>
<dbReference type="FunFam" id="3.40.50.1000:FF:000144">
    <property type="entry name" value="copper-transporting ATPase 1 isoform X2"/>
    <property type="match status" value="1"/>
</dbReference>
<dbReference type="FunFam" id="2.70.150.10:FF:000002">
    <property type="entry name" value="Copper-transporting ATPase 1, putative"/>
    <property type="match status" value="1"/>
</dbReference>
<dbReference type="Gene3D" id="3.30.70.100">
    <property type="match status" value="6"/>
</dbReference>
<dbReference type="Gene3D" id="3.40.1110.10">
    <property type="entry name" value="Calcium-transporting ATPase, cytoplasmic domain N"/>
    <property type="match status" value="1"/>
</dbReference>
<dbReference type="Gene3D" id="2.70.150.10">
    <property type="entry name" value="Calcium-transporting ATPase, cytoplasmic transduction domain A"/>
    <property type="match status" value="1"/>
</dbReference>
<dbReference type="Gene3D" id="3.40.50.1000">
    <property type="entry name" value="HAD superfamily/HAD-like"/>
    <property type="match status" value="1"/>
</dbReference>
<dbReference type="InterPro" id="IPR023299">
    <property type="entry name" value="ATPase_P-typ_cyto_dom_N"/>
</dbReference>
<dbReference type="InterPro" id="IPR018303">
    <property type="entry name" value="ATPase_P-typ_P_site"/>
</dbReference>
<dbReference type="InterPro" id="IPR023298">
    <property type="entry name" value="ATPase_P-typ_TM_dom_sf"/>
</dbReference>
<dbReference type="InterPro" id="IPR008250">
    <property type="entry name" value="ATPase_P-typ_transduc_dom_A_sf"/>
</dbReference>
<dbReference type="InterPro" id="IPR036412">
    <property type="entry name" value="HAD-like_sf"/>
</dbReference>
<dbReference type="InterPro" id="IPR023214">
    <property type="entry name" value="HAD_sf"/>
</dbReference>
<dbReference type="InterPro" id="IPR017969">
    <property type="entry name" value="Heavy-metal-associated_CS"/>
</dbReference>
<dbReference type="InterPro" id="IPR006122">
    <property type="entry name" value="HMA_Cu_ion-bd"/>
</dbReference>
<dbReference type="InterPro" id="IPR006121">
    <property type="entry name" value="HMA_dom"/>
</dbReference>
<dbReference type="InterPro" id="IPR036163">
    <property type="entry name" value="HMA_dom_sf"/>
</dbReference>
<dbReference type="InterPro" id="IPR027256">
    <property type="entry name" value="P-typ_ATPase_IB"/>
</dbReference>
<dbReference type="InterPro" id="IPR001757">
    <property type="entry name" value="P_typ_ATPase"/>
</dbReference>
<dbReference type="InterPro" id="IPR044492">
    <property type="entry name" value="P_typ_ATPase_HD_dom"/>
</dbReference>
<dbReference type="NCBIfam" id="TIGR01525">
    <property type="entry name" value="ATPase-IB_hvy"/>
    <property type="match status" value="1"/>
</dbReference>
<dbReference type="NCBIfam" id="TIGR01494">
    <property type="entry name" value="ATPase_P-type"/>
    <property type="match status" value="2"/>
</dbReference>
<dbReference type="NCBIfam" id="TIGR00003">
    <property type="entry name" value="copper ion binding protein"/>
    <property type="match status" value="5"/>
</dbReference>
<dbReference type="PANTHER" id="PTHR46594">
    <property type="entry name" value="P-TYPE CATION-TRANSPORTING ATPASE"/>
    <property type="match status" value="1"/>
</dbReference>
<dbReference type="PANTHER" id="PTHR46594:SF8">
    <property type="entry name" value="P-TYPE CU(+) TRANSPORTER"/>
    <property type="match status" value="1"/>
</dbReference>
<dbReference type="Pfam" id="PF00122">
    <property type="entry name" value="E1-E2_ATPase"/>
    <property type="match status" value="1"/>
</dbReference>
<dbReference type="Pfam" id="PF00403">
    <property type="entry name" value="HMA"/>
    <property type="match status" value="5"/>
</dbReference>
<dbReference type="Pfam" id="PF00702">
    <property type="entry name" value="Hydrolase"/>
    <property type="match status" value="1"/>
</dbReference>
<dbReference type="PRINTS" id="PR00119">
    <property type="entry name" value="CATATPASE"/>
</dbReference>
<dbReference type="PRINTS" id="PR00942">
    <property type="entry name" value="CUATPASEI"/>
</dbReference>
<dbReference type="SFLD" id="SFLDS00003">
    <property type="entry name" value="Haloacid_Dehalogenase"/>
    <property type="match status" value="1"/>
</dbReference>
<dbReference type="SFLD" id="SFLDF00027">
    <property type="entry name" value="p-type_atpase"/>
    <property type="match status" value="1"/>
</dbReference>
<dbReference type="SUPFAM" id="SSF81653">
    <property type="entry name" value="Calcium ATPase, transduction domain A"/>
    <property type="match status" value="1"/>
</dbReference>
<dbReference type="SUPFAM" id="SSF81665">
    <property type="entry name" value="Calcium ATPase, transmembrane domain M"/>
    <property type="match status" value="1"/>
</dbReference>
<dbReference type="SUPFAM" id="SSF56784">
    <property type="entry name" value="HAD-like"/>
    <property type="match status" value="1"/>
</dbReference>
<dbReference type="SUPFAM" id="SSF55008">
    <property type="entry name" value="HMA, heavy metal-associated domain"/>
    <property type="match status" value="6"/>
</dbReference>
<dbReference type="PROSITE" id="PS00154">
    <property type="entry name" value="ATPASE_E1_E2"/>
    <property type="match status" value="1"/>
</dbReference>
<dbReference type="PROSITE" id="PS01047">
    <property type="entry name" value="HMA_1"/>
    <property type="match status" value="5"/>
</dbReference>
<dbReference type="PROSITE" id="PS50846">
    <property type="entry name" value="HMA_2"/>
    <property type="match status" value="6"/>
</dbReference>
<sequence length="1451" mass="155990">MPEQERKVTAKEASRKILSKLALPTRPWGQSMKQSFAFDNVGYEGGLDSTCFILQLTTGVVSILGMTCHSCVKSIEDRISSLKGIVSIKVSLEQGSATVKYVPSVLNLQQICLQIEDMGFEASAAEGKAASWPSRSSPAQEAVVKLRVEGMTCQSCVSSIEGKIRKLQGVVRVKVSLSNQEAVITYQPYLIQPEDLRDHICDMGFEAAIKNRTAPLRLGPIDINKLESTNLKRAAVPPIQNSNHLETPGHQQNHLATLPLRIDGMHCKSCVLNIEGNIGQLPGVQNIHVSLENKTAQVQYDSSCITPLFLQTAIEALPPGYFKVSLPDGLEKESGSSSVPSLGSSQRQQEPGPCRTAVLTITGIPRDSSVQPMEDMLSQMKGVQQIDISLAEGTGAVLYDPSVVSSDELRTAVEDMGFEVSVNPENITTNRVSSGNSVPQAVGDSPGSVQNMASDTRGLLTHQGPGYLSDSPPSPGGTASQKCFVQIKGMTCASCVSNIERSLQRHAGILSVLVALMSGKAEVKYDPEVIQSPRIAQLIEDLGFEAAIMEDNTVSEGDIELIITGMTCASCVHNIESKLTRTNGITYASVALATSKAHVKFDPEIIGPRDIIKVIEEIGFHASLAHRNPNAHHLDHKTEIKQWKKSFLCSLVFGIPVMGLMIYMLIPSSKPHETMVLDHNIIPGLSVLNLIFFILCTFVQFLGGWYFYVQAYKSLRHKSANMDVLIVLATTIAYAYSLVILVVAIAEKAEKSPVTFFDTPPMLFVFIALGRWLEHVAKSKTSEALAKLMSLQATEATVVTLGEDNLILREEQVPMELVQRGDIIKVVPGGKFPVDGKVLEGNTMADESLITGEAMPVTKKPGSIVIAGSINAHGSVLIKATHVGNDTTLAQIVKLVEEAQMSKAPIQQLADRFSGYFVPFIIIISTLTLVVWIIIGFVDFGIVQKYFPSPSKHISQTEVIIRFAFQTSITVLCIACPCSLGLATPTAVMVGTGVAAQNGVLIKGGKPLEMAHKIKTVMFDKTGTITHGVPRVMRFLLLVDVATLSLRKVLAVVGTAEASSEHPLGVAVTKYCKEELGTETLGYSTDFQAVPGCGISCKVSNVESILAHRGPTAHPIGVGNPPIGEGTGPQTFSVLIGNREWMRRNGLTISSDISDAMTDHEMKGQTAILVAIDGVLCGMIAIADAVKPEAALASITLKSMGVDVALITGDNRKTARAIATQVGINKVFAEVLPSHKVAKVQELQNKGKKVAMVGDGVNDSPALAQADVGIAIGTGTDVAIDAADVVLIRNDLLDVVASIHLSKRTVRRIRVNLVLALIYNMVGIPIAAGVFMPIGIVLQPWMGSAAASSVSVVLSSLQLKCYRKPDLERYEAQAHGRMKPLSASQVSVHVGMDDRRRDSPRATPWDQVSYVSQVSLSSLTSDRLSRHGGMAEDGGDKWSLLLSDRDEEQCI</sequence>
<keyword id="KW-0024">Alternative initiation</keyword>
<keyword id="KW-0025">Alternative splicing</keyword>
<keyword id="KW-0067">ATP-binding</keyword>
<keyword id="KW-0090">Biological rhythms</keyword>
<keyword id="KW-0186">Copper</keyword>
<keyword id="KW-0187">Copper transport</keyword>
<keyword id="KW-0967">Endosome</keyword>
<keyword id="KW-0333">Golgi apparatus</keyword>
<keyword id="KW-0406">Ion transport</keyword>
<keyword id="KW-0460">Magnesium</keyword>
<keyword id="KW-0472">Membrane</keyword>
<keyword id="KW-0479">Metal-binding</keyword>
<keyword id="KW-0547">Nucleotide-binding</keyword>
<keyword id="KW-0597">Phosphoprotein</keyword>
<keyword id="KW-1185">Reference proteome</keyword>
<keyword id="KW-0677">Repeat</keyword>
<keyword id="KW-1278">Translocase</keyword>
<keyword id="KW-0812">Transmembrane</keyword>
<keyword id="KW-1133">Transmembrane helix</keyword>
<keyword id="KW-0813">Transport</keyword>